<accession>B8IZR8</accession>
<name>RS21_DESDA</name>
<evidence type="ECO:0000255" key="1">
    <source>
        <dbReference type="HAMAP-Rule" id="MF_00358"/>
    </source>
</evidence>
<evidence type="ECO:0000305" key="2"/>
<protein>
    <recommendedName>
        <fullName evidence="1">Small ribosomal subunit protein bS21</fullName>
    </recommendedName>
    <alternativeName>
        <fullName evidence="2">30S ribosomal protein S21</fullName>
    </alternativeName>
</protein>
<reference key="1">
    <citation type="submission" date="2009-01" db="EMBL/GenBank/DDBJ databases">
        <title>Complete sequence of Desulfovibrio desulfuricans subsp. desulfuricans str. ATCC 27774.</title>
        <authorList>
            <consortium name="US DOE Joint Genome Institute"/>
            <person name="Lucas S."/>
            <person name="Copeland A."/>
            <person name="Lapidus A."/>
            <person name="Glavina del Rio T."/>
            <person name="Tice H."/>
            <person name="Bruce D."/>
            <person name="Goodwin L."/>
            <person name="Pitluck S."/>
            <person name="Sims D."/>
            <person name="Lu M."/>
            <person name="Kiss H."/>
            <person name="Meineke L."/>
            <person name="Brettin T."/>
            <person name="Detter J.C."/>
            <person name="Han C."/>
            <person name="Larimer F."/>
            <person name="Land M."/>
            <person name="Hauser L."/>
            <person name="Kyrpides N."/>
            <person name="Ovchinnikova G."/>
            <person name="Hazen T.C."/>
        </authorList>
    </citation>
    <scope>NUCLEOTIDE SEQUENCE [LARGE SCALE GENOMIC DNA]</scope>
    <source>
        <strain>ATCC 27774 / DSM 6949 / MB</strain>
    </source>
</reference>
<keyword id="KW-0687">Ribonucleoprotein</keyword>
<keyword id="KW-0689">Ribosomal protein</keyword>
<organism>
    <name type="scientific">Desulfovibrio desulfuricans (strain ATCC 27774 / DSM 6949 / MB)</name>
    <dbReference type="NCBI Taxonomy" id="525146"/>
    <lineage>
        <taxon>Bacteria</taxon>
        <taxon>Pseudomonadati</taxon>
        <taxon>Thermodesulfobacteriota</taxon>
        <taxon>Desulfovibrionia</taxon>
        <taxon>Desulfovibrionales</taxon>
        <taxon>Desulfovibrionaceae</taxon>
        <taxon>Desulfovibrio</taxon>
    </lineage>
</organism>
<proteinExistence type="inferred from homology"/>
<comment type="similarity">
    <text evidence="1">Belongs to the bacterial ribosomal protein bS21 family.</text>
</comment>
<feature type="chain" id="PRO_1000194289" description="Small ribosomal subunit protein bS21">
    <location>
        <begin position="1"/>
        <end position="67"/>
    </location>
</feature>
<dbReference type="EMBL" id="CP001358">
    <property type="protein sequence ID" value="ACL48995.1"/>
    <property type="molecule type" value="Genomic_DNA"/>
</dbReference>
<dbReference type="SMR" id="B8IZR8"/>
<dbReference type="STRING" id="525146.Ddes_1089"/>
<dbReference type="KEGG" id="dds:Ddes_1089"/>
<dbReference type="eggNOG" id="COG0828">
    <property type="taxonomic scope" value="Bacteria"/>
</dbReference>
<dbReference type="HOGENOM" id="CLU_159258_1_2_7"/>
<dbReference type="GO" id="GO:1990904">
    <property type="term" value="C:ribonucleoprotein complex"/>
    <property type="evidence" value="ECO:0007669"/>
    <property type="project" value="UniProtKB-KW"/>
</dbReference>
<dbReference type="GO" id="GO:0005840">
    <property type="term" value="C:ribosome"/>
    <property type="evidence" value="ECO:0007669"/>
    <property type="project" value="UniProtKB-KW"/>
</dbReference>
<dbReference type="GO" id="GO:0003735">
    <property type="term" value="F:structural constituent of ribosome"/>
    <property type="evidence" value="ECO:0007669"/>
    <property type="project" value="InterPro"/>
</dbReference>
<dbReference type="GO" id="GO:0006412">
    <property type="term" value="P:translation"/>
    <property type="evidence" value="ECO:0007669"/>
    <property type="project" value="UniProtKB-UniRule"/>
</dbReference>
<dbReference type="Gene3D" id="1.20.5.1150">
    <property type="entry name" value="Ribosomal protein S8"/>
    <property type="match status" value="1"/>
</dbReference>
<dbReference type="HAMAP" id="MF_00358">
    <property type="entry name" value="Ribosomal_bS21"/>
    <property type="match status" value="1"/>
</dbReference>
<dbReference type="InterPro" id="IPR001911">
    <property type="entry name" value="Ribosomal_bS21"/>
</dbReference>
<dbReference type="InterPro" id="IPR018278">
    <property type="entry name" value="Ribosomal_bS21_CS"/>
</dbReference>
<dbReference type="InterPro" id="IPR038380">
    <property type="entry name" value="Ribosomal_bS21_sf"/>
</dbReference>
<dbReference type="NCBIfam" id="TIGR00030">
    <property type="entry name" value="S21p"/>
    <property type="match status" value="1"/>
</dbReference>
<dbReference type="PANTHER" id="PTHR21109">
    <property type="entry name" value="MITOCHONDRIAL 28S RIBOSOMAL PROTEIN S21"/>
    <property type="match status" value="1"/>
</dbReference>
<dbReference type="PANTHER" id="PTHR21109:SF22">
    <property type="entry name" value="SMALL RIBOSOMAL SUBUNIT PROTEIN BS21"/>
    <property type="match status" value="1"/>
</dbReference>
<dbReference type="Pfam" id="PF01165">
    <property type="entry name" value="Ribosomal_S21"/>
    <property type="match status" value="1"/>
</dbReference>
<dbReference type="PRINTS" id="PR00976">
    <property type="entry name" value="RIBOSOMALS21"/>
</dbReference>
<dbReference type="PROSITE" id="PS01181">
    <property type="entry name" value="RIBOSOMAL_S21"/>
    <property type="match status" value="1"/>
</dbReference>
<sequence>MPGVFLNEDDYNFDIALRRFKKQVEKAGILSEMKKRQHYEKPSVMRKKKKAAARKRLMKKIRKMNMA</sequence>
<gene>
    <name evidence="1" type="primary">rpsU</name>
    <name type="ordered locus">Ddes_1089</name>
</gene>